<keyword id="KW-0106">Calcium</keyword>
<keyword id="KW-0479">Metal-binding</keyword>
<keyword id="KW-1185">Reference proteome</keyword>
<keyword id="KW-0677">Repeat</keyword>
<dbReference type="EMBL" id="AB016888">
    <property type="protein sequence ID" value="BAB10479.1"/>
    <property type="molecule type" value="Genomic_DNA"/>
</dbReference>
<dbReference type="EMBL" id="CP002688">
    <property type="protein sequence ID" value="AED94803.1"/>
    <property type="molecule type" value="Genomic_DNA"/>
</dbReference>
<dbReference type="EMBL" id="AY093775">
    <property type="protein sequence ID" value="AAM10393.1"/>
    <property type="molecule type" value="mRNA"/>
</dbReference>
<dbReference type="EMBL" id="AY143820">
    <property type="protein sequence ID" value="AAN28759.1"/>
    <property type="molecule type" value="mRNA"/>
</dbReference>
<dbReference type="EMBL" id="AY088908">
    <property type="protein sequence ID" value="AAM67214.1"/>
    <property type="molecule type" value="mRNA"/>
</dbReference>
<dbReference type="RefSeq" id="NP_199053.1">
    <property type="nucleotide sequence ID" value="NM_123603.3"/>
</dbReference>
<dbReference type="SMR" id="Q9FIH9"/>
<dbReference type="BioGRID" id="19494">
    <property type="interactions" value="4"/>
</dbReference>
<dbReference type="FunCoup" id="Q9FIH9">
    <property type="interactions" value="203"/>
</dbReference>
<dbReference type="STRING" id="3702.Q9FIH9"/>
<dbReference type="iPTMnet" id="Q9FIH9"/>
<dbReference type="PaxDb" id="3702-AT5G42380.1"/>
<dbReference type="ProteomicsDB" id="240904"/>
<dbReference type="EnsemblPlants" id="AT5G42380.1">
    <property type="protein sequence ID" value="AT5G42380.1"/>
    <property type="gene ID" value="AT5G42380"/>
</dbReference>
<dbReference type="GeneID" id="834244"/>
<dbReference type="Gramene" id="AT5G42380.1">
    <property type="protein sequence ID" value="AT5G42380.1"/>
    <property type="gene ID" value="AT5G42380"/>
</dbReference>
<dbReference type="KEGG" id="ath:AT5G42380"/>
<dbReference type="Araport" id="AT5G42380"/>
<dbReference type="TAIR" id="AT5G42380">
    <property type="gene designation" value="CML37"/>
</dbReference>
<dbReference type="eggNOG" id="KOG0027">
    <property type="taxonomic scope" value="Eukaryota"/>
</dbReference>
<dbReference type="HOGENOM" id="CLU_061288_20_6_1"/>
<dbReference type="InParanoid" id="Q9FIH9"/>
<dbReference type="OMA" id="FNEFTIM"/>
<dbReference type="PhylomeDB" id="Q9FIH9"/>
<dbReference type="PRO" id="PR:Q9FIH9"/>
<dbReference type="Proteomes" id="UP000006548">
    <property type="component" value="Chromosome 5"/>
</dbReference>
<dbReference type="ExpressionAtlas" id="Q9FIH9">
    <property type="expression patterns" value="baseline and differential"/>
</dbReference>
<dbReference type="GO" id="GO:0005737">
    <property type="term" value="C:cytoplasm"/>
    <property type="evidence" value="ECO:0000314"/>
    <property type="project" value="TAIR"/>
</dbReference>
<dbReference type="GO" id="GO:0005634">
    <property type="term" value="C:nucleus"/>
    <property type="evidence" value="ECO:0000314"/>
    <property type="project" value="TAIR"/>
</dbReference>
<dbReference type="GO" id="GO:0005509">
    <property type="term" value="F:calcium ion binding"/>
    <property type="evidence" value="ECO:0000314"/>
    <property type="project" value="TAIR"/>
</dbReference>
<dbReference type="GO" id="GO:0071456">
    <property type="term" value="P:cellular response to hypoxia"/>
    <property type="evidence" value="ECO:0007007"/>
    <property type="project" value="TAIR"/>
</dbReference>
<dbReference type="GO" id="GO:0010193">
    <property type="term" value="P:response to ozone"/>
    <property type="evidence" value="ECO:0000270"/>
    <property type="project" value="TAIR"/>
</dbReference>
<dbReference type="CDD" id="cd00051">
    <property type="entry name" value="EFh"/>
    <property type="match status" value="1"/>
</dbReference>
<dbReference type="FunFam" id="1.10.238.10:FF:000850">
    <property type="entry name" value="Calcium-binding protein CML37"/>
    <property type="match status" value="1"/>
</dbReference>
<dbReference type="FunFam" id="1.10.238.10:FF:000237">
    <property type="entry name" value="Calcium-binding protein CML38"/>
    <property type="match status" value="1"/>
</dbReference>
<dbReference type="Gene3D" id="1.10.238.10">
    <property type="entry name" value="EF-hand"/>
    <property type="match status" value="2"/>
</dbReference>
<dbReference type="InterPro" id="IPR050145">
    <property type="entry name" value="Centrin_CML-like"/>
</dbReference>
<dbReference type="InterPro" id="IPR011992">
    <property type="entry name" value="EF-hand-dom_pair"/>
</dbReference>
<dbReference type="InterPro" id="IPR018247">
    <property type="entry name" value="EF_Hand_1_Ca_BS"/>
</dbReference>
<dbReference type="InterPro" id="IPR002048">
    <property type="entry name" value="EF_hand_dom"/>
</dbReference>
<dbReference type="PANTHER" id="PTHR23050">
    <property type="entry name" value="CALCIUM BINDING PROTEIN"/>
    <property type="match status" value="1"/>
</dbReference>
<dbReference type="Pfam" id="PF13499">
    <property type="entry name" value="EF-hand_7"/>
    <property type="match status" value="1"/>
</dbReference>
<dbReference type="Pfam" id="PF13833">
    <property type="entry name" value="EF-hand_8"/>
    <property type="match status" value="1"/>
</dbReference>
<dbReference type="SMART" id="SM00054">
    <property type="entry name" value="EFh"/>
    <property type="match status" value="3"/>
</dbReference>
<dbReference type="SUPFAM" id="SSF47473">
    <property type="entry name" value="EF-hand"/>
    <property type="match status" value="1"/>
</dbReference>
<dbReference type="PROSITE" id="PS00018">
    <property type="entry name" value="EF_HAND_1"/>
    <property type="match status" value="3"/>
</dbReference>
<dbReference type="PROSITE" id="PS50222">
    <property type="entry name" value="EF_HAND_2"/>
    <property type="match status" value="4"/>
</dbReference>
<name>CML37_ARATH</name>
<evidence type="ECO:0000255" key="1">
    <source>
        <dbReference type="PROSITE-ProRule" id="PRU00448"/>
    </source>
</evidence>
<evidence type="ECO:0000256" key="2">
    <source>
        <dbReference type="SAM" id="MobiDB-lite"/>
    </source>
</evidence>
<evidence type="ECO:0000269" key="3">
    <source>
    </source>
</evidence>
<evidence type="ECO:0000269" key="4">
    <source>
    </source>
</evidence>
<evidence type="ECO:0000269" key="5">
    <source>
    </source>
</evidence>
<evidence type="ECO:0000303" key="6">
    <source ref="5"/>
</evidence>
<evidence type="ECO:0000305" key="7"/>
<evidence type="ECO:0000312" key="8">
    <source>
        <dbReference type="Araport" id="AT5G42380"/>
    </source>
</evidence>
<evidence type="ECO:0000312" key="9">
    <source>
        <dbReference type="EMBL" id="BAB10479.1"/>
    </source>
</evidence>
<accession>Q9FIH9</accession>
<accession>Q8L8M5</accession>
<comment type="function">
    <text evidence="4">Potential calcium sensor that binds calcium in vitro.</text>
</comment>
<comment type="subunit">
    <text evidence="5">Binds to ABCG36.</text>
</comment>
<comment type="tissue specificity">
    <text evidence="4">Expressed in cotyledons, stipule, young leaves and at the hypocotyl-root junction. In mature root, expressed in the stele, cortex, emerging lateral root, root tip and root cap. In mature plant, expressed at the base of cauline and floral branches, and in rosette and cauline leaves. Expressed from stage 9 to 14 of flower development in anthers. At stage 15, expressed in carpel, sepals, petals and pollen until dehiscence. Expressed in developing seeds and young siliques.</text>
</comment>
<comment type="induction">
    <text evidence="3 4">By touch, salt and hydrogen peroxide treatments, drought stress, wounding, dark and infection by the bacterial pathogen P.syringae.</text>
</comment>
<comment type="caution">
    <text evidence="7">Although assigned as a calmodulin family member by Ref.5, it only contains EF-hand domains.</text>
</comment>
<organism>
    <name type="scientific">Arabidopsis thaliana</name>
    <name type="common">Mouse-ear cress</name>
    <dbReference type="NCBI Taxonomy" id="3702"/>
    <lineage>
        <taxon>Eukaryota</taxon>
        <taxon>Viridiplantae</taxon>
        <taxon>Streptophyta</taxon>
        <taxon>Embryophyta</taxon>
        <taxon>Tracheophyta</taxon>
        <taxon>Spermatophyta</taxon>
        <taxon>Magnoliopsida</taxon>
        <taxon>eudicotyledons</taxon>
        <taxon>Gunneridae</taxon>
        <taxon>Pentapetalae</taxon>
        <taxon>rosids</taxon>
        <taxon>malvids</taxon>
        <taxon>Brassicales</taxon>
        <taxon>Brassicaceae</taxon>
        <taxon>Camelineae</taxon>
        <taxon>Arabidopsis</taxon>
    </lineage>
</organism>
<reference key="1">
    <citation type="journal article" date="1998" name="DNA Res.">
        <title>Structural analysis of Arabidopsis thaliana chromosome 5. VIII. Sequence features of the regions of 1,081,958 bp covered by seventeen physically assigned P1 and TAC clones.</title>
        <authorList>
            <person name="Asamizu E."/>
            <person name="Sato S."/>
            <person name="Kaneko T."/>
            <person name="Nakamura Y."/>
            <person name="Kotani H."/>
            <person name="Miyajima N."/>
            <person name="Tabata S."/>
        </authorList>
    </citation>
    <scope>NUCLEOTIDE SEQUENCE [LARGE SCALE GENOMIC DNA]</scope>
    <source>
        <strain>cv. Columbia</strain>
    </source>
</reference>
<reference key="2">
    <citation type="journal article" date="2017" name="Plant J.">
        <title>Araport11: a complete reannotation of the Arabidopsis thaliana reference genome.</title>
        <authorList>
            <person name="Cheng C.Y."/>
            <person name="Krishnakumar V."/>
            <person name="Chan A.P."/>
            <person name="Thibaud-Nissen F."/>
            <person name="Schobel S."/>
            <person name="Town C.D."/>
        </authorList>
    </citation>
    <scope>GENOME REANNOTATION</scope>
    <source>
        <strain>cv. Columbia</strain>
    </source>
</reference>
<reference key="3">
    <citation type="journal article" date="2003" name="Science">
        <title>Empirical analysis of transcriptional activity in the Arabidopsis genome.</title>
        <authorList>
            <person name="Yamada K."/>
            <person name="Lim J."/>
            <person name="Dale J.M."/>
            <person name="Chen H."/>
            <person name="Shinn P."/>
            <person name="Palm C.J."/>
            <person name="Southwick A.M."/>
            <person name="Wu H.C."/>
            <person name="Kim C.J."/>
            <person name="Nguyen M."/>
            <person name="Pham P.K."/>
            <person name="Cheuk R.F."/>
            <person name="Karlin-Newmann G."/>
            <person name="Liu S.X."/>
            <person name="Lam B."/>
            <person name="Sakano H."/>
            <person name="Wu T."/>
            <person name="Yu G."/>
            <person name="Miranda M."/>
            <person name="Quach H.L."/>
            <person name="Tripp M."/>
            <person name="Chang C.H."/>
            <person name="Lee J.M."/>
            <person name="Toriumi M.J."/>
            <person name="Chan M.M."/>
            <person name="Tang C.C."/>
            <person name="Onodera C.S."/>
            <person name="Deng J.M."/>
            <person name="Akiyama K."/>
            <person name="Ansari Y."/>
            <person name="Arakawa T."/>
            <person name="Banh J."/>
            <person name="Banno F."/>
            <person name="Bowser L."/>
            <person name="Brooks S.Y."/>
            <person name="Carninci P."/>
            <person name="Chao Q."/>
            <person name="Choy N."/>
            <person name="Enju A."/>
            <person name="Goldsmith A.D."/>
            <person name="Gurjal M."/>
            <person name="Hansen N.F."/>
            <person name="Hayashizaki Y."/>
            <person name="Johnson-Hopson C."/>
            <person name="Hsuan V.W."/>
            <person name="Iida K."/>
            <person name="Karnes M."/>
            <person name="Khan S."/>
            <person name="Koesema E."/>
            <person name="Ishida J."/>
            <person name="Jiang P.X."/>
            <person name="Jones T."/>
            <person name="Kawai J."/>
            <person name="Kamiya A."/>
            <person name="Meyers C."/>
            <person name="Nakajima M."/>
            <person name="Narusaka M."/>
            <person name="Seki M."/>
            <person name="Sakurai T."/>
            <person name="Satou M."/>
            <person name="Tamse R."/>
            <person name="Vaysberg M."/>
            <person name="Wallender E.K."/>
            <person name="Wong C."/>
            <person name="Yamamura Y."/>
            <person name="Yuan S."/>
            <person name="Shinozaki K."/>
            <person name="Davis R.W."/>
            <person name="Theologis A."/>
            <person name="Ecker J.R."/>
        </authorList>
    </citation>
    <scope>NUCLEOTIDE SEQUENCE [LARGE SCALE MRNA]</scope>
    <source>
        <strain>cv. Columbia</strain>
    </source>
</reference>
<reference key="4">
    <citation type="submission" date="2002-03" db="EMBL/GenBank/DDBJ databases">
        <title>Full-length cDNA from Arabidopsis thaliana.</title>
        <authorList>
            <person name="Brover V.V."/>
            <person name="Troukhan M.E."/>
            <person name="Alexandrov N.A."/>
            <person name="Lu Y.-P."/>
            <person name="Flavell R.B."/>
            <person name="Feldmann K.A."/>
        </authorList>
    </citation>
    <scope>NUCLEOTIDE SEQUENCE [LARGE SCALE MRNA]</scope>
</reference>
<reference key="5">
    <citation type="journal article" date="2003" name="New Phytol.">
        <title>Calmodulins and related potential calcium sensors of Arabidopsis.</title>
        <authorList>
            <person name="McCormack E."/>
            <person name="Braam J."/>
        </authorList>
    </citation>
    <scope>GENE FAMILY</scope>
    <scope>NOMENCLATURE</scope>
</reference>
<reference key="6">
    <citation type="journal article" date="2005" name="New Phytol.">
        <title>Genome-wide identification of touch- and darkness-regulated Arabidopsis genes: a focus on calmodulin-like and XTH genes.</title>
        <authorList>
            <person name="Lee D."/>
            <person name="Polisensky D.H."/>
            <person name="Braam J."/>
        </authorList>
    </citation>
    <scope>INDUCTION</scope>
</reference>
<reference key="7">
    <citation type="journal article" date="2007" name="Plant Mol. Biol.">
        <title>Developmental and stimulus-induced expression patterns of Arabidopsis calmodulin-like genes CML37, CML38 and CML39.</title>
        <authorList>
            <person name="Vanderbeld B."/>
            <person name="Snedden W.A."/>
        </authorList>
    </citation>
    <scope>FUNCTION</scope>
    <scope>TISSUE SPECIFICITY</scope>
    <scope>INDUCTION</scope>
</reference>
<reference key="8">
    <citation type="journal article" date="2016" name="New Phytol.">
        <title>ABC transporter PEN3/PDR8/ABCG36 interacts with calmodulin that, like PEN3, is required for Arabidopsis nonhost resistance.</title>
        <authorList>
            <person name="Campe R."/>
            <person name="Langenbach C."/>
            <person name="Leissing F."/>
            <person name="Popescu G.V."/>
            <person name="Popescu S.C."/>
            <person name="Goellner K."/>
            <person name="Beckers G.J."/>
            <person name="Conrath U."/>
        </authorList>
    </citation>
    <scope>INTERACTION WITH ABCG36</scope>
    <source>
        <strain>cv. Columbia</strain>
    </source>
</reference>
<proteinExistence type="evidence at protein level"/>
<gene>
    <name evidence="6" type="primary">CML37</name>
    <name evidence="8" type="ordered locus">At5g42380</name>
    <name evidence="9" type="ORF">MDH9.7</name>
</gene>
<sequence length="185" mass="20602">MTLAKNQKSSLSRLYKKVSSKRSESSRNLEDESRTSSNSSGSSSLNVNELRTVFDYMDANSDGKISGEELQSCVSLLGGALSSREVEEVVKTSDVDGDGFIDFEEFLKLMEGEDGSDEERRKELKEAFGMYVMEGEEFITAASLRRTLSRLGESCTVDACKVMIRGFDQNDDGVLSFDEFVLMMR</sequence>
<feature type="chain" id="PRO_0000342961" description="Calcium-binding protein CML37">
    <location>
        <begin position="1"/>
        <end position="185"/>
    </location>
</feature>
<feature type="domain" description="EF-hand 1" evidence="1">
    <location>
        <begin position="45"/>
        <end position="80"/>
    </location>
</feature>
<feature type="domain" description="EF-hand 2" evidence="1">
    <location>
        <begin position="81"/>
        <end position="116"/>
    </location>
</feature>
<feature type="domain" description="EF-hand 3" evidence="1">
    <location>
        <begin position="119"/>
        <end position="154"/>
    </location>
</feature>
<feature type="domain" description="EF-hand 4" evidence="1">
    <location>
        <begin position="155"/>
        <end position="185"/>
    </location>
</feature>
<feature type="region of interest" description="Disordered" evidence="2">
    <location>
        <begin position="1"/>
        <end position="45"/>
    </location>
</feature>
<feature type="compositionally biased region" description="Polar residues" evidence="2">
    <location>
        <begin position="1"/>
        <end position="12"/>
    </location>
</feature>
<feature type="compositionally biased region" description="Basic and acidic residues" evidence="2">
    <location>
        <begin position="21"/>
        <end position="34"/>
    </location>
</feature>
<feature type="compositionally biased region" description="Low complexity" evidence="2">
    <location>
        <begin position="35"/>
        <end position="44"/>
    </location>
</feature>
<feature type="binding site" evidence="1">
    <location>
        <position position="58"/>
    </location>
    <ligand>
        <name>Ca(2+)</name>
        <dbReference type="ChEBI" id="CHEBI:29108"/>
        <label>1</label>
    </ligand>
</feature>
<feature type="binding site" evidence="1">
    <location>
        <position position="60"/>
    </location>
    <ligand>
        <name>Ca(2+)</name>
        <dbReference type="ChEBI" id="CHEBI:29108"/>
        <label>1</label>
    </ligand>
</feature>
<feature type="binding site" evidence="1">
    <location>
        <position position="62"/>
    </location>
    <ligand>
        <name>Ca(2+)</name>
        <dbReference type="ChEBI" id="CHEBI:29108"/>
        <label>1</label>
    </ligand>
</feature>
<feature type="binding site" evidence="1">
    <location>
        <position position="64"/>
    </location>
    <ligand>
        <name>Ca(2+)</name>
        <dbReference type="ChEBI" id="CHEBI:29108"/>
        <label>1</label>
    </ligand>
</feature>
<feature type="binding site" evidence="1">
    <location>
        <position position="69"/>
    </location>
    <ligand>
        <name>Ca(2+)</name>
        <dbReference type="ChEBI" id="CHEBI:29108"/>
        <label>1</label>
    </ligand>
</feature>
<feature type="binding site" evidence="1">
    <location>
        <position position="94"/>
    </location>
    <ligand>
        <name>Ca(2+)</name>
        <dbReference type="ChEBI" id="CHEBI:29108"/>
        <label>2</label>
    </ligand>
</feature>
<feature type="binding site" evidence="1">
    <location>
        <position position="96"/>
    </location>
    <ligand>
        <name>Ca(2+)</name>
        <dbReference type="ChEBI" id="CHEBI:29108"/>
        <label>2</label>
    </ligand>
</feature>
<feature type="binding site" evidence="1">
    <location>
        <position position="98"/>
    </location>
    <ligand>
        <name>Ca(2+)</name>
        <dbReference type="ChEBI" id="CHEBI:29108"/>
        <label>2</label>
    </ligand>
</feature>
<feature type="binding site" evidence="1">
    <location>
        <position position="105"/>
    </location>
    <ligand>
        <name>Ca(2+)</name>
        <dbReference type="ChEBI" id="CHEBI:29108"/>
        <label>2</label>
    </ligand>
</feature>
<feature type="binding site" evidence="1">
    <location>
        <position position="168"/>
    </location>
    <ligand>
        <name>Ca(2+)</name>
        <dbReference type="ChEBI" id="CHEBI:29108"/>
        <label>3</label>
    </ligand>
</feature>
<feature type="binding site" evidence="1">
    <location>
        <position position="170"/>
    </location>
    <ligand>
        <name>Ca(2+)</name>
        <dbReference type="ChEBI" id="CHEBI:29108"/>
        <label>3</label>
    </ligand>
</feature>
<feature type="binding site" evidence="1">
    <location>
        <position position="172"/>
    </location>
    <ligand>
        <name>Ca(2+)</name>
        <dbReference type="ChEBI" id="CHEBI:29108"/>
        <label>3</label>
    </ligand>
</feature>
<feature type="binding site" evidence="1">
    <location>
        <position position="179"/>
    </location>
    <ligand>
        <name>Ca(2+)</name>
        <dbReference type="ChEBI" id="CHEBI:29108"/>
        <label>3</label>
    </ligand>
</feature>
<feature type="sequence conflict" description="In Ref. 4; AAM67214." evidence="7" ref="4">
    <original>S</original>
    <variation>A</variation>
    <location>
        <position position="33"/>
    </location>
</feature>
<feature type="sequence conflict" description="In Ref. 4; AAM67214." evidence="7" ref="4">
    <original>N</original>
    <variation>S</variation>
    <location>
        <position position="38"/>
    </location>
</feature>
<feature type="sequence conflict" description="In Ref. 4; AAM67214." evidence="7" ref="4">
    <original>V</original>
    <variation>L</variation>
    <location>
        <position position="132"/>
    </location>
</feature>
<protein>
    <recommendedName>
        <fullName evidence="6">Calcium-binding protein CML37</fullName>
    </recommendedName>
    <alternativeName>
        <fullName evidence="6">Calmodulin-like protein 37</fullName>
    </alternativeName>
</protein>